<gene>
    <name evidence="1" type="primary">metK</name>
    <name type="ordered locus">CA_C2856</name>
</gene>
<reference key="1">
    <citation type="journal article" date="2001" name="J. Bacteriol.">
        <title>Genome sequence and comparative analysis of the solvent-producing bacterium Clostridium acetobutylicum.</title>
        <authorList>
            <person name="Noelling J."/>
            <person name="Breton G."/>
            <person name="Omelchenko M.V."/>
            <person name="Makarova K.S."/>
            <person name="Zeng Q."/>
            <person name="Gibson R."/>
            <person name="Lee H.M."/>
            <person name="Dubois J."/>
            <person name="Qiu D."/>
            <person name="Hitti J."/>
            <person name="Wolf Y.I."/>
            <person name="Tatusov R.L."/>
            <person name="Sabathe F."/>
            <person name="Doucette-Stamm L.A."/>
            <person name="Soucaille P."/>
            <person name="Daly M.J."/>
            <person name="Bennett G.N."/>
            <person name="Koonin E.V."/>
            <person name="Smith D.R."/>
        </authorList>
    </citation>
    <scope>NUCLEOTIDE SEQUENCE [LARGE SCALE GENOMIC DNA]</scope>
    <source>
        <strain>ATCC 824 / DSM 792 / JCM 1419 / IAM 19013 / LMG 5710 / NBRC 13948 / NRRL B-527 / VKM B-1787 / 2291 / W</strain>
    </source>
</reference>
<dbReference type="EC" id="2.5.1.6" evidence="1"/>
<dbReference type="EMBL" id="AE001437">
    <property type="protein sequence ID" value="AAK80799.1"/>
    <property type="molecule type" value="Genomic_DNA"/>
</dbReference>
<dbReference type="PIR" id="D97251">
    <property type="entry name" value="D97251"/>
</dbReference>
<dbReference type="RefSeq" id="NP_349459.1">
    <property type="nucleotide sequence ID" value="NC_003030.1"/>
</dbReference>
<dbReference type="RefSeq" id="WP_010966140.1">
    <property type="nucleotide sequence ID" value="NC_003030.1"/>
</dbReference>
<dbReference type="SMR" id="Q97F85"/>
<dbReference type="STRING" id="272562.CA_C2856"/>
<dbReference type="GeneID" id="44999340"/>
<dbReference type="KEGG" id="cac:CA_C2856"/>
<dbReference type="PATRIC" id="fig|272562.8.peg.3040"/>
<dbReference type="eggNOG" id="COG0192">
    <property type="taxonomic scope" value="Bacteria"/>
</dbReference>
<dbReference type="HOGENOM" id="CLU_041802_1_1_9"/>
<dbReference type="OrthoDB" id="9801686at2"/>
<dbReference type="UniPathway" id="UPA00315">
    <property type="reaction ID" value="UER00080"/>
</dbReference>
<dbReference type="Proteomes" id="UP000000814">
    <property type="component" value="Chromosome"/>
</dbReference>
<dbReference type="GO" id="GO:0005737">
    <property type="term" value="C:cytoplasm"/>
    <property type="evidence" value="ECO:0007669"/>
    <property type="project" value="UniProtKB-SubCell"/>
</dbReference>
<dbReference type="GO" id="GO:0005524">
    <property type="term" value="F:ATP binding"/>
    <property type="evidence" value="ECO:0007669"/>
    <property type="project" value="UniProtKB-UniRule"/>
</dbReference>
<dbReference type="GO" id="GO:0000287">
    <property type="term" value="F:magnesium ion binding"/>
    <property type="evidence" value="ECO:0007669"/>
    <property type="project" value="UniProtKB-UniRule"/>
</dbReference>
<dbReference type="GO" id="GO:0004478">
    <property type="term" value="F:methionine adenosyltransferase activity"/>
    <property type="evidence" value="ECO:0007669"/>
    <property type="project" value="UniProtKB-UniRule"/>
</dbReference>
<dbReference type="GO" id="GO:0006730">
    <property type="term" value="P:one-carbon metabolic process"/>
    <property type="evidence" value="ECO:0007669"/>
    <property type="project" value="UniProtKB-KW"/>
</dbReference>
<dbReference type="GO" id="GO:0006556">
    <property type="term" value="P:S-adenosylmethionine biosynthetic process"/>
    <property type="evidence" value="ECO:0007669"/>
    <property type="project" value="UniProtKB-UniRule"/>
</dbReference>
<dbReference type="CDD" id="cd18079">
    <property type="entry name" value="S-AdoMet_synt"/>
    <property type="match status" value="1"/>
</dbReference>
<dbReference type="FunFam" id="3.30.300.10:FF:000003">
    <property type="entry name" value="S-adenosylmethionine synthase"/>
    <property type="match status" value="1"/>
</dbReference>
<dbReference type="FunFam" id="3.30.300.10:FF:000004">
    <property type="entry name" value="S-adenosylmethionine synthase"/>
    <property type="match status" value="1"/>
</dbReference>
<dbReference type="Gene3D" id="3.30.300.10">
    <property type="match status" value="3"/>
</dbReference>
<dbReference type="HAMAP" id="MF_00086">
    <property type="entry name" value="S_AdoMet_synth1"/>
    <property type="match status" value="1"/>
</dbReference>
<dbReference type="InterPro" id="IPR022631">
    <property type="entry name" value="ADOMET_SYNTHASE_CS"/>
</dbReference>
<dbReference type="InterPro" id="IPR022630">
    <property type="entry name" value="S-AdoMet_synt_C"/>
</dbReference>
<dbReference type="InterPro" id="IPR022629">
    <property type="entry name" value="S-AdoMet_synt_central"/>
</dbReference>
<dbReference type="InterPro" id="IPR022628">
    <property type="entry name" value="S-AdoMet_synt_N"/>
</dbReference>
<dbReference type="InterPro" id="IPR002133">
    <property type="entry name" value="S-AdoMet_synthetase"/>
</dbReference>
<dbReference type="InterPro" id="IPR022636">
    <property type="entry name" value="S-AdoMet_synthetase_sfam"/>
</dbReference>
<dbReference type="NCBIfam" id="TIGR01034">
    <property type="entry name" value="metK"/>
    <property type="match status" value="1"/>
</dbReference>
<dbReference type="PANTHER" id="PTHR11964">
    <property type="entry name" value="S-ADENOSYLMETHIONINE SYNTHETASE"/>
    <property type="match status" value="1"/>
</dbReference>
<dbReference type="Pfam" id="PF02773">
    <property type="entry name" value="S-AdoMet_synt_C"/>
    <property type="match status" value="1"/>
</dbReference>
<dbReference type="Pfam" id="PF02772">
    <property type="entry name" value="S-AdoMet_synt_M"/>
    <property type="match status" value="1"/>
</dbReference>
<dbReference type="Pfam" id="PF00438">
    <property type="entry name" value="S-AdoMet_synt_N"/>
    <property type="match status" value="1"/>
</dbReference>
<dbReference type="PIRSF" id="PIRSF000497">
    <property type="entry name" value="MAT"/>
    <property type="match status" value="1"/>
</dbReference>
<dbReference type="SUPFAM" id="SSF55973">
    <property type="entry name" value="S-adenosylmethionine synthetase"/>
    <property type="match status" value="3"/>
</dbReference>
<dbReference type="PROSITE" id="PS00376">
    <property type="entry name" value="ADOMET_SYNTHASE_1"/>
    <property type="match status" value="1"/>
</dbReference>
<dbReference type="PROSITE" id="PS00377">
    <property type="entry name" value="ADOMET_SYNTHASE_2"/>
    <property type="match status" value="1"/>
</dbReference>
<sequence length="391" mass="43039">MRKLFTSESVTEGHPDKICDQISDAILDAILEKDPNGRVACETTVTTGIVNVMGEISTNCYVDIPKIVRKTVREIGYTRAKYGFDCDTCAVVTSIDEQSADIAMGVDEALESKKGEMDKIDAVGAGDQGMMFGYATNETKEFMPMPIALAHRLSRRLAEVRKDGTLDYLRPDGKTQVTIEYEDDKPVRVDAIVISTQHGPEIGHEQIEKDLIEKVVKYVISPELLDENTKYYINPTGRFVVGGPQGDSGLTGRKIIVDTYGGYGRHGGGAFSGKDPTKVDRSAAYAARWVAKNLVAAGIADKLEIQLAYAIGVAKPVSISVDTFGTGKIEESKIVEIVEKVFDLRPGAIIRDLNLKRPIYRQVAAYGHFGRLDVELPWEQLDRVEAIKKYL</sequence>
<comment type="function">
    <text evidence="1">Catalyzes the formation of S-adenosylmethionine (AdoMet) from methionine and ATP. The overall synthetic reaction is composed of two sequential steps, AdoMet formation and the subsequent tripolyphosphate hydrolysis which occurs prior to release of AdoMet from the enzyme.</text>
</comment>
<comment type="catalytic activity">
    <reaction evidence="1">
        <text>L-methionine + ATP + H2O = S-adenosyl-L-methionine + phosphate + diphosphate</text>
        <dbReference type="Rhea" id="RHEA:21080"/>
        <dbReference type="ChEBI" id="CHEBI:15377"/>
        <dbReference type="ChEBI" id="CHEBI:30616"/>
        <dbReference type="ChEBI" id="CHEBI:33019"/>
        <dbReference type="ChEBI" id="CHEBI:43474"/>
        <dbReference type="ChEBI" id="CHEBI:57844"/>
        <dbReference type="ChEBI" id="CHEBI:59789"/>
        <dbReference type="EC" id="2.5.1.6"/>
    </reaction>
</comment>
<comment type="cofactor">
    <cofactor evidence="1">
        <name>Mg(2+)</name>
        <dbReference type="ChEBI" id="CHEBI:18420"/>
    </cofactor>
    <text evidence="1">Binds 2 divalent ions per subunit.</text>
</comment>
<comment type="cofactor">
    <cofactor evidence="1">
        <name>K(+)</name>
        <dbReference type="ChEBI" id="CHEBI:29103"/>
    </cofactor>
    <text evidence="1">Binds 1 potassium ion per subunit.</text>
</comment>
<comment type="pathway">
    <text evidence="1">Amino-acid biosynthesis; S-adenosyl-L-methionine biosynthesis; S-adenosyl-L-methionine from L-methionine: step 1/1.</text>
</comment>
<comment type="subunit">
    <text evidence="1">Homotetramer; dimer of dimers.</text>
</comment>
<comment type="subcellular location">
    <subcellularLocation>
        <location evidence="1">Cytoplasm</location>
    </subcellularLocation>
</comment>
<comment type="similarity">
    <text evidence="1">Belongs to the AdoMet synthase family.</text>
</comment>
<proteinExistence type="inferred from homology"/>
<feature type="chain" id="PRO_0000174509" description="S-adenosylmethionine synthase">
    <location>
        <begin position="1"/>
        <end position="391"/>
    </location>
</feature>
<feature type="region of interest" description="Flexible loop" evidence="1">
    <location>
        <begin position="98"/>
        <end position="108"/>
    </location>
</feature>
<feature type="binding site" description="in other chain" evidence="1">
    <location>
        <position position="14"/>
    </location>
    <ligand>
        <name>ATP</name>
        <dbReference type="ChEBI" id="CHEBI:30616"/>
        <note>ligand shared between two neighboring subunits</note>
    </ligand>
</feature>
<feature type="binding site" evidence="1">
    <location>
        <position position="16"/>
    </location>
    <ligand>
        <name>Mg(2+)</name>
        <dbReference type="ChEBI" id="CHEBI:18420"/>
    </ligand>
</feature>
<feature type="binding site" evidence="1">
    <location>
        <position position="42"/>
    </location>
    <ligand>
        <name>K(+)</name>
        <dbReference type="ChEBI" id="CHEBI:29103"/>
    </ligand>
</feature>
<feature type="binding site" description="in other chain" evidence="1">
    <location>
        <position position="55"/>
    </location>
    <ligand>
        <name>L-methionine</name>
        <dbReference type="ChEBI" id="CHEBI:57844"/>
        <note>ligand shared between two neighboring subunits</note>
    </ligand>
</feature>
<feature type="binding site" description="in other chain" evidence="1">
    <location>
        <position position="98"/>
    </location>
    <ligand>
        <name>L-methionine</name>
        <dbReference type="ChEBI" id="CHEBI:57844"/>
        <note>ligand shared between two neighboring subunits</note>
    </ligand>
</feature>
<feature type="binding site" description="in other chain" evidence="1">
    <location>
        <begin position="172"/>
        <end position="174"/>
    </location>
    <ligand>
        <name>ATP</name>
        <dbReference type="ChEBI" id="CHEBI:30616"/>
        <note>ligand shared between two neighboring subunits</note>
    </ligand>
</feature>
<feature type="binding site" description="in other chain" evidence="1">
    <location>
        <begin position="238"/>
        <end position="239"/>
    </location>
    <ligand>
        <name>ATP</name>
        <dbReference type="ChEBI" id="CHEBI:30616"/>
        <note>ligand shared between two neighboring subunits</note>
    </ligand>
</feature>
<feature type="binding site" evidence="1">
    <location>
        <position position="247"/>
    </location>
    <ligand>
        <name>ATP</name>
        <dbReference type="ChEBI" id="CHEBI:30616"/>
        <note>ligand shared between two neighboring subunits</note>
    </ligand>
</feature>
<feature type="binding site" evidence="1">
    <location>
        <position position="247"/>
    </location>
    <ligand>
        <name>L-methionine</name>
        <dbReference type="ChEBI" id="CHEBI:57844"/>
        <note>ligand shared between two neighboring subunits</note>
    </ligand>
</feature>
<feature type="binding site" description="in other chain" evidence="1">
    <location>
        <begin position="253"/>
        <end position="254"/>
    </location>
    <ligand>
        <name>ATP</name>
        <dbReference type="ChEBI" id="CHEBI:30616"/>
        <note>ligand shared between two neighboring subunits</note>
    </ligand>
</feature>
<feature type="binding site" evidence="1">
    <location>
        <position position="270"/>
    </location>
    <ligand>
        <name>ATP</name>
        <dbReference type="ChEBI" id="CHEBI:30616"/>
        <note>ligand shared between two neighboring subunits</note>
    </ligand>
</feature>
<feature type="binding site" evidence="1">
    <location>
        <position position="274"/>
    </location>
    <ligand>
        <name>ATP</name>
        <dbReference type="ChEBI" id="CHEBI:30616"/>
        <note>ligand shared between two neighboring subunits</note>
    </ligand>
</feature>
<feature type="binding site" description="in other chain" evidence="1">
    <location>
        <position position="278"/>
    </location>
    <ligand>
        <name>L-methionine</name>
        <dbReference type="ChEBI" id="CHEBI:57844"/>
        <note>ligand shared between two neighboring subunits</note>
    </ligand>
</feature>
<evidence type="ECO:0000255" key="1">
    <source>
        <dbReference type="HAMAP-Rule" id="MF_00086"/>
    </source>
</evidence>
<keyword id="KW-0067">ATP-binding</keyword>
<keyword id="KW-0963">Cytoplasm</keyword>
<keyword id="KW-0460">Magnesium</keyword>
<keyword id="KW-0479">Metal-binding</keyword>
<keyword id="KW-0547">Nucleotide-binding</keyword>
<keyword id="KW-0554">One-carbon metabolism</keyword>
<keyword id="KW-0630">Potassium</keyword>
<keyword id="KW-1185">Reference proteome</keyword>
<keyword id="KW-0808">Transferase</keyword>
<accession>Q97F85</accession>
<protein>
    <recommendedName>
        <fullName evidence="1">S-adenosylmethionine synthase</fullName>
        <shortName evidence="1">AdoMet synthase</shortName>
        <ecNumber evidence="1">2.5.1.6</ecNumber>
    </recommendedName>
    <alternativeName>
        <fullName evidence="1">MAT</fullName>
    </alternativeName>
    <alternativeName>
        <fullName evidence="1">Methionine adenosyltransferase</fullName>
    </alternativeName>
</protein>
<name>METK_CLOAB</name>
<organism>
    <name type="scientific">Clostridium acetobutylicum (strain ATCC 824 / DSM 792 / JCM 1419 / IAM 19013 / LMG 5710 / NBRC 13948 / NRRL B-527 / VKM B-1787 / 2291 / W)</name>
    <dbReference type="NCBI Taxonomy" id="272562"/>
    <lineage>
        <taxon>Bacteria</taxon>
        <taxon>Bacillati</taxon>
        <taxon>Bacillota</taxon>
        <taxon>Clostridia</taxon>
        <taxon>Eubacteriales</taxon>
        <taxon>Clostridiaceae</taxon>
        <taxon>Clostridium</taxon>
    </lineage>
</organism>